<proteinExistence type="evidence at protein level"/>
<evidence type="ECO:0000250" key="1">
    <source>
        <dbReference type="UniProtKB" id="B2RYG6"/>
    </source>
</evidence>
<evidence type="ECO:0000250" key="2">
    <source>
        <dbReference type="UniProtKB" id="Q96FW1"/>
    </source>
</evidence>
<evidence type="ECO:0000255" key="3">
    <source>
        <dbReference type="PROSITE-ProRule" id="PRU00139"/>
    </source>
</evidence>
<evidence type="ECO:0000269" key="4">
    <source>
    </source>
</evidence>
<evidence type="ECO:0000305" key="5"/>
<organism>
    <name type="scientific">Mus musculus</name>
    <name type="common">Mouse</name>
    <dbReference type="NCBI Taxonomy" id="10090"/>
    <lineage>
        <taxon>Eukaryota</taxon>
        <taxon>Metazoa</taxon>
        <taxon>Chordata</taxon>
        <taxon>Craniata</taxon>
        <taxon>Vertebrata</taxon>
        <taxon>Euteleostomi</taxon>
        <taxon>Mammalia</taxon>
        <taxon>Eutheria</taxon>
        <taxon>Euarchontoglires</taxon>
        <taxon>Glires</taxon>
        <taxon>Rodentia</taxon>
        <taxon>Myomorpha</taxon>
        <taxon>Muroidea</taxon>
        <taxon>Muridae</taxon>
        <taxon>Murinae</taxon>
        <taxon>Mus</taxon>
        <taxon>Mus</taxon>
    </lineage>
</organism>
<gene>
    <name type="primary">Otub1</name>
</gene>
<protein>
    <recommendedName>
        <fullName>Ubiquitin thioesterase OTUB1</fullName>
        <ecNumber evidence="2">3.4.19.12</ecNumber>
    </recommendedName>
    <alternativeName>
        <fullName>Deubiquitinating enzyme OTUB1</fullName>
    </alternativeName>
    <alternativeName>
        <fullName>OTU domain-containing ubiquitin aldehyde-binding protein 1</fullName>
    </alternativeName>
    <alternativeName>
        <fullName>Otubain-1</fullName>
    </alternativeName>
    <alternativeName>
        <fullName>Ubiquitin-specific-processing protease OTUB1</fullName>
    </alternativeName>
</protein>
<comment type="function">
    <text evidence="2 4">Hydrolase that can specifically remove compared to 'Lys-48'-linked conjugated ubiquitin from proteins and plays an important regulatory role at the level of protein turnover by preventing degradation (By similarity). Regulator of T-cell anergy, a phenomenon that occurs when T-cells are rendered unresponsive to antigen rechallenge and no longer respond to their cognate antigen (PubMed:14661020). Acts via its interaction with RNF128/GRAIL (PubMed:14661020). Surprisingly, it regulates RNF128-mediated ubiquitination, but does not deubiquitinate polyubiquitinated RNF128 (PubMed:14661020). Deubiquitinates estrogen receptor alpha (ESR1) (By similarity). Mediates deubiquitination of 'Lys-48'-linked polyubiquitin chains, but not 'Lys-63'-linked polyubiquitin chains (By similarity). Not able to cleave di-ubiquitin (By similarity). Also capable of removing NEDD8 from NEDD8 conjugates, but with a much lower preference compared to 'Lys-48'-linked ubiquitin (By similarity).</text>
</comment>
<comment type="function">
    <text evidence="2">Plays a key non-catalytic role in DNA repair regulation by inhibiting activity of RNF168, an E3 ubiquitin-protein ligase that promotes accumulation of 'Lys-63'-linked histone H2A and H2AX at DNA damage sites. Inhibits RNF168 independently of ubiquitin thioesterase activity by binding and inhibiting UBE2N/UBC13, the E2 partner of RNF168, thereby limiting spreading of 'Lys-63'-linked histone H2A and H2AX marks. Inhibition occurs by binding to free ubiquitin: free ubiquitin acts as an allosteric regulator that increases affinity for UBE2N/UBC13 and disrupts interaction with UBE2V1. The OTUB1-UBE2N/UBC13-free ubiquitin complex adopts a configuration that mimics a cleaved 'Lys48'-linked di-ubiquitin chain. Acts as a regulator of mTORC1 and mTORC2 complexes. When phosphorylated at Tyr-26, acts as an activator of the mTORC1 complex by mediating deubiquitination of RPTOR via a non-catalytic process: acts by binding and inhibiting the activity of the ubiquitin-conjugating enzyme E2 (UBE2D1/UBCH5A, UBE2W/UBC16 and UBE2N/UBC13), thereby preventing ubiquitination of RPTOR. Can also act as an inhibitor of the mTORC1 and mTORC2 complexes in response to amino acids by mediating non-catalytic deubiquitination of DEPTOR.</text>
</comment>
<comment type="catalytic activity">
    <reaction evidence="2">
        <text>Thiol-dependent hydrolysis of ester, thioester, amide, peptide and isopeptide bonds formed by the C-terminal Gly of ubiquitin (a 76-residue protein attached to proteins as an intracellular targeting signal).</text>
        <dbReference type="EC" id="3.4.19.12"/>
    </reaction>
</comment>
<comment type="activity regulation">
    <text evidence="2">By free ubiquitin: binding of free ubiquitin triggers conformational changes in the OTU domain and formation of a ubiquitin-binding helix in the N-terminus, promoting binding of the conjugated donor ubiquitin in UBE2N/UBC13 to OTUB1.</text>
</comment>
<comment type="subunit">
    <text evidence="2">Interacts with RNF128. Forms a ternary complex with RNF128 and USP8. Interacts with FUS and RACK1. Interacts with UBE2D1/UBCH5A, UBE2W/UBC16 and UBE2N/UBC13.</text>
</comment>
<comment type="subcellular location">
    <subcellularLocation>
        <location evidence="1">Cytoplasm</location>
    </subcellularLocation>
</comment>
<comment type="PTM">
    <text evidence="2">Phosphorylation at Tyr-26 by SRC and SRMS promotes deubiquitination of RPTOR via a non-catalytic process.</text>
</comment>
<comment type="similarity">
    <text evidence="5">Belongs to the peptidase C65 family.</text>
</comment>
<sequence>MAAEEPQQQKQEPLGSDSEGVNCLAYDEAIMAQQDRIQQEIAVQNPLVSERLELSVLYKEYAEDDNIYQQKIKDLHKKYSYIRKTRPDGNCFYRAFGFSHLEALLDDSKELQRFKAVSAKSKEDLVSQGFTEFTIEDFHNTFMDLIEQVEKQTSVADLLASFNDQSTSDYLVVYLRLLTSGYLQRESKFFEHFIEGGRTVKEFCQQEVEPMCKESDHIHIIALAQALSVSIQVEYMDRGEGGTTNPHVFPEGSEPKVYLLYRPGHYDILYK</sequence>
<accession>Q7TQI3</accession>
<accession>Q3ULV9</accession>
<accession>Q3V408</accession>
<accession>Q8C326</accession>
<accession>Q8R5F2</accession>
<name>OTUB1_MOUSE</name>
<keyword id="KW-0007">Acetylation</keyword>
<keyword id="KW-1064">Adaptive immunity</keyword>
<keyword id="KW-0963">Cytoplasm</keyword>
<keyword id="KW-0903">Direct protein sequencing</keyword>
<keyword id="KW-0227">DNA damage</keyword>
<keyword id="KW-0234">DNA repair</keyword>
<keyword id="KW-0378">Hydrolase</keyword>
<keyword id="KW-0391">Immunity</keyword>
<keyword id="KW-0597">Phosphoprotein</keyword>
<keyword id="KW-0645">Protease</keyword>
<keyword id="KW-1185">Reference proteome</keyword>
<keyword id="KW-0788">Thiol protease</keyword>
<keyword id="KW-0833">Ubl conjugation pathway</keyword>
<feature type="initiator methionine" description="Removed" evidence="2">
    <location>
        <position position="1"/>
    </location>
</feature>
<feature type="chain" id="PRO_0000221009" description="Ubiquitin thioesterase OTUB1">
    <location>
        <begin position="2"/>
        <end position="271"/>
    </location>
</feature>
<feature type="domain" description="OTU" evidence="3">
    <location>
        <begin position="80"/>
        <end position="271"/>
    </location>
</feature>
<feature type="region of interest" description="Ubiquitin-conjugating enzyme E2 binding" evidence="2">
    <location>
        <begin position="130"/>
        <end position="138"/>
    </location>
</feature>
<feature type="region of interest" description="Ubiquitin-conjugating enzyme E2 binding" evidence="2">
    <location>
        <begin position="169"/>
        <end position="177"/>
    </location>
</feature>
<feature type="region of interest" description="Free ubiquitin binding" evidence="2">
    <location>
        <begin position="189"/>
        <end position="195"/>
    </location>
</feature>
<feature type="region of interest" description="Ubiquitin-conjugating enzyme E2 binding" evidence="2">
    <location>
        <begin position="206"/>
        <end position="213"/>
    </location>
</feature>
<feature type="region of interest" description="Free ubiquitin binding" evidence="2">
    <location>
        <begin position="214"/>
        <end position="221"/>
    </location>
</feature>
<feature type="region of interest" description="Free ubiquitin binding" evidence="2">
    <location>
        <begin position="245"/>
        <end position="251"/>
    </location>
</feature>
<feature type="active site" evidence="2">
    <location>
        <position position="88"/>
    </location>
</feature>
<feature type="active site" description="Nucleophile" evidence="2">
    <location>
        <position position="91"/>
    </location>
</feature>
<feature type="active site" evidence="2">
    <location>
        <position position="265"/>
    </location>
</feature>
<feature type="site" description="Interacts with free ubiquitin" evidence="2">
    <location>
        <position position="221"/>
    </location>
</feature>
<feature type="site" description="Interacts with free ubiquitin" evidence="2">
    <location>
        <position position="235"/>
    </location>
</feature>
<feature type="site" description="Interacts with free ubiquitin" evidence="2">
    <location>
        <position position="237"/>
    </location>
</feature>
<feature type="site" description="Interacts with free ubiquitin" evidence="2">
    <location>
        <position position="261"/>
    </location>
</feature>
<feature type="site" description="Interacts with free ubiquitin" evidence="2">
    <location>
        <position position="266"/>
    </location>
</feature>
<feature type="modified residue" description="N-acetylalanine" evidence="2">
    <location>
        <position position="2"/>
    </location>
</feature>
<feature type="modified residue" description="Phosphoserine" evidence="2">
    <location>
        <position position="16"/>
    </location>
</feature>
<feature type="modified residue" description="Phosphotyrosine" evidence="2">
    <location>
        <position position="26"/>
    </location>
</feature>
<feature type="sequence conflict" description="In Ref. 1; BAE20433." evidence="5" ref="1">
    <original>E</original>
    <variation>D</variation>
    <location>
        <position position="186"/>
    </location>
</feature>
<dbReference type="EC" id="3.4.19.12" evidence="2"/>
<dbReference type="EMBL" id="AK027996">
    <property type="protein sequence ID" value="BAE20433.1"/>
    <property type="molecule type" value="mRNA"/>
</dbReference>
<dbReference type="EMBL" id="AK140070">
    <property type="protein sequence ID" value="BAE24227.1"/>
    <property type="molecule type" value="mRNA"/>
</dbReference>
<dbReference type="EMBL" id="AK145273">
    <property type="protein sequence ID" value="BAE26339.1"/>
    <property type="molecule type" value="mRNA"/>
</dbReference>
<dbReference type="EMBL" id="AK145970">
    <property type="protein sequence ID" value="BAE26795.1"/>
    <property type="molecule type" value="mRNA"/>
</dbReference>
<dbReference type="EMBL" id="BC022575">
    <property type="protein sequence ID" value="AAH22575.1"/>
    <property type="molecule type" value="mRNA"/>
</dbReference>
<dbReference type="EMBL" id="BC054410">
    <property type="protein sequence ID" value="AAH54410.1"/>
    <property type="molecule type" value="mRNA"/>
</dbReference>
<dbReference type="CCDS" id="CCDS29520.1"/>
<dbReference type="RefSeq" id="NP_598911.1">
    <property type="nucleotide sequence ID" value="NM_134150.2"/>
</dbReference>
<dbReference type="SMR" id="Q7TQI3"/>
<dbReference type="BioGRID" id="223228">
    <property type="interactions" value="23"/>
</dbReference>
<dbReference type="FunCoup" id="Q7TQI3">
    <property type="interactions" value="4834"/>
</dbReference>
<dbReference type="IntAct" id="Q7TQI3">
    <property type="interactions" value="4"/>
</dbReference>
<dbReference type="MINT" id="Q7TQI3"/>
<dbReference type="STRING" id="10090.ENSMUSP00000025679"/>
<dbReference type="MEROPS" id="C65.001"/>
<dbReference type="GlyGen" id="Q7TQI3">
    <property type="glycosylation" value="1 site, 1 O-linked glycan (1 site)"/>
</dbReference>
<dbReference type="iPTMnet" id="Q7TQI3"/>
<dbReference type="PhosphoSitePlus" id="Q7TQI3"/>
<dbReference type="SwissPalm" id="Q7TQI3"/>
<dbReference type="REPRODUCTION-2DPAGE" id="Q7TQI3"/>
<dbReference type="jPOST" id="Q7TQI3"/>
<dbReference type="PaxDb" id="10090-ENSMUSP00000025679"/>
<dbReference type="PeptideAtlas" id="Q7TQI3"/>
<dbReference type="ProteomicsDB" id="294083"/>
<dbReference type="Pumba" id="Q7TQI3"/>
<dbReference type="Antibodypedia" id="29104">
    <property type="antibodies" value="497 antibodies from 34 providers"/>
</dbReference>
<dbReference type="DNASU" id="107260"/>
<dbReference type="Ensembl" id="ENSMUST00000025679.11">
    <property type="protein sequence ID" value="ENSMUSP00000025679.5"/>
    <property type="gene ID" value="ENSMUSG00000024767.12"/>
</dbReference>
<dbReference type="GeneID" id="107260"/>
<dbReference type="KEGG" id="mmu:107260"/>
<dbReference type="UCSC" id="uc008gki.1">
    <property type="organism name" value="mouse"/>
</dbReference>
<dbReference type="AGR" id="MGI:2147616"/>
<dbReference type="CTD" id="55611"/>
<dbReference type="MGI" id="MGI:2147616">
    <property type="gene designation" value="Otub1"/>
</dbReference>
<dbReference type="VEuPathDB" id="HostDB:ENSMUSG00000024767"/>
<dbReference type="eggNOG" id="KOG3991">
    <property type="taxonomic scope" value="Eukaryota"/>
</dbReference>
<dbReference type="GeneTree" id="ENSGT00390000006979"/>
<dbReference type="InParanoid" id="Q7TQI3"/>
<dbReference type="OMA" id="ADHVQIT"/>
<dbReference type="OrthoDB" id="18915at2759"/>
<dbReference type="PhylomeDB" id="Q7TQI3"/>
<dbReference type="TreeFam" id="TF314145"/>
<dbReference type="Reactome" id="R-MMU-5689880">
    <property type="pathway name" value="Ub-specific processing proteases"/>
</dbReference>
<dbReference type="Reactome" id="R-MMU-5689896">
    <property type="pathway name" value="Ovarian tumor domain proteases"/>
</dbReference>
<dbReference type="BioGRID-ORCS" id="107260">
    <property type="hits" value="10 hits in 116 CRISPR screens"/>
</dbReference>
<dbReference type="ChiTaRS" id="Otub1">
    <property type="organism name" value="mouse"/>
</dbReference>
<dbReference type="PRO" id="PR:Q7TQI3"/>
<dbReference type="Proteomes" id="UP000000589">
    <property type="component" value="Chromosome 19"/>
</dbReference>
<dbReference type="RNAct" id="Q7TQI3">
    <property type="molecule type" value="protein"/>
</dbReference>
<dbReference type="Bgee" id="ENSMUSG00000024767">
    <property type="expression patterns" value="Expressed in embryonic brain and 258 other cell types or tissues"/>
</dbReference>
<dbReference type="ExpressionAtlas" id="Q7TQI3">
    <property type="expression patterns" value="baseline and differential"/>
</dbReference>
<dbReference type="GO" id="GO:0005737">
    <property type="term" value="C:cytoplasm"/>
    <property type="evidence" value="ECO:0007669"/>
    <property type="project" value="UniProtKB-SubCell"/>
</dbReference>
<dbReference type="GO" id="GO:0004843">
    <property type="term" value="F:cysteine-type deubiquitinase activity"/>
    <property type="evidence" value="ECO:0000250"/>
    <property type="project" value="UniProtKB"/>
</dbReference>
<dbReference type="GO" id="GO:0019784">
    <property type="term" value="F:deNEDDylase activity"/>
    <property type="evidence" value="ECO:0000250"/>
    <property type="project" value="UniProtKB"/>
</dbReference>
<dbReference type="GO" id="GO:0101005">
    <property type="term" value="F:deubiquitinase activity"/>
    <property type="evidence" value="ECO:0000266"/>
    <property type="project" value="MGI"/>
</dbReference>
<dbReference type="GO" id="GO:0043130">
    <property type="term" value="F:ubiquitin binding"/>
    <property type="evidence" value="ECO:0000250"/>
    <property type="project" value="UniProtKB"/>
</dbReference>
<dbReference type="GO" id="GO:0031625">
    <property type="term" value="F:ubiquitin protein ligase binding"/>
    <property type="evidence" value="ECO:0007669"/>
    <property type="project" value="Ensembl"/>
</dbReference>
<dbReference type="GO" id="GO:0055105">
    <property type="term" value="F:ubiquitin-protein transferase inhibitor activity"/>
    <property type="evidence" value="ECO:0000250"/>
    <property type="project" value="UniProtKB"/>
</dbReference>
<dbReference type="GO" id="GO:0002250">
    <property type="term" value="P:adaptive immune response"/>
    <property type="evidence" value="ECO:0007669"/>
    <property type="project" value="UniProtKB-KW"/>
</dbReference>
<dbReference type="GO" id="GO:0006974">
    <property type="term" value="P:DNA damage response"/>
    <property type="evidence" value="ECO:0000250"/>
    <property type="project" value="UniProtKB"/>
</dbReference>
<dbReference type="GO" id="GO:0006281">
    <property type="term" value="P:DNA repair"/>
    <property type="evidence" value="ECO:0007669"/>
    <property type="project" value="UniProtKB-KW"/>
</dbReference>
<dbReference type="GO" id="GO:2000780">
    <property type="term" value="P:negative regulation of double-strand break repair"/>
    <property type="evidence" value="ECO:0000250"/>
    <property type="project" value="UniProtKB"/>
</dbReference>
<dbReference type="GO" id="GO:1904263">
    <property type="term" value="P:positive regulation of TORC1 signaling"/>
    <property type="evidence" value="ECO:0000250"/>
    <property type="project" value="UniProtKB"/>
</dbReference>
<dbReference type="GO" id="GO:0016579">
    <property type="term" value="P:protein deubiquitination"/>
    <property type="evidence" value="ECO:0000250"/>
    <property type="project" value="UniProtKB"/>
</dbReference>
<dbReference type="GO" id="GO:0071108">
    <property type="term" value="P:protein K48-linked deubiquitination"/>
    <property type="evidence" value="ECO:0000250"/>
    <property type="project" value="UniProtKB"/>
</dbReference>
<dbReference type="GO" id="GO:0006508">
    <property type="term" value="P:proteolysis"/>
    <property type="evidence" value="ECO:0007669"/>
    <property type="project" value="UniProtKB-KW"/>
</dbReference>
<dbReference type="CDD" id="cd22763">
    <property type="entry name" value="OTUB1"/>
    <property type="match status" value="1"/>
</dbReference>
<dbReference type="FunFam" id="1.20.1300.20:FF:000001">
    <property type="entry name" value="Ubiquitin thioesterase OTUB1"/>
    <property type="match status" value="1"/>
</dbReference>
<dbReference type="FunFam" id="3.30.200.60:FF:000003">
    <property type="entry name" value="Ubiquitin thioesterase OTUB1"/>
    <property type="match status" value="1"/>
</dbReference>
<dbReference type="Gene3D" id="3.30.200.60">
    <property type="entry name" value="Peptidase C65 Otubain, subdomain 1"/>
    <property type="match status" value="1"/>
</dbReference>
<dbReference type="Gene3D" id="1.20.1300.20">
    <property type="entry name" value="Peptidase C65 Otubain, subdomain 2"/>
    <property type="match status" value="1"/>
</dbReference>
<dbReference type="InterPro" id="IPR003323">
    <property type="entry name" value="OTU_dom"/>
</dbReference>
<dbReference type="InterPro" id="IPR016615">
    <property type="entry name" value="Otubain"/>
</dbReference>
<dbReference type="InterPro" id="IPR038765">
    <property type="entry name" value="Papain-like_cys_pep_sf"/>
</dbReference>
<dbReference type="InterPro" id="IPR019400">
    <property type="entry name" value="Peptidase_C65_otubain"/>
</dbReference>
<dbReference type="InterPro" id="IPR042468">
    <property type="entry name" value="Peptidase_C65_otubain_sub1"/>
</dbReference>
<dbReference type="InterPro" id="IPR042467">
    <property type="entry name" value="Peptidase_C65_otubain_sub2"/>
</dbReference>
<dbReference type="PANTHER" id="PTHR12931:SF19">
    <property type="entry name" value="UBIQUITIN THIOESTERASE OTUB1"/>
    <property type="match status" value="1"/>
</dbReference>
<dbReference type="PANTHER" id="PTHR12931">
    <property type="entry name" value="UBIQUITIN THIOLESTERASE PROTEIN OTUB"/>
    <property type="match status" value="1"/>
</dbReference>
<dbReference type="Pfam" id="PF10275">
    <property type="entry name" value="Peptidase_C65"/>
    <property type="match status" value="1"/>
</dbReference>
<dbReference type="PIRSF" id="PIRSF013503">
    <property type="entry name" value="Ubiquitin_thioesterase_Otubain"/>
    <property type="match status" value="1"/>
</dbReference>
<dbReference type="SUPFAM" id="SSF54001">
    <property type="entry name" value="Cysteine proteinases"/>
    <property type="match status" value="1"/>
</dbReference>
<dbReference type="PROSITE" id="PS50802">
    <property type="entry name" value="OTU"/>
    <property type="match status" value="1"/>
</dbReference>
<reference key="1">
    <citation type="journal article" date="2005" name="Science">
        <title>The transcriptional landscape of the mammalian genome.</title>
        <authorList>
            <person name="Carninci P."/>
            <person name="Kasukawa T."/>
            <person name="Katayama S."/>
            <person name="Gough J."/>
            <person name="Frith M.C."/>
            <person name="Maeda N."/>
            <person name="Oyama R."/>
            <person name="Ravasi T."/>
            <person name="Lenhard B."/>
            <person name="Wells C."/>
            <person name="Kodzius R."/>
            <person name="Shimokawa K."/>
            <person name="Bajic V.B."/>
            <person name="Brenner S.E."/>
            <person name="Batalov S."/>
            <person name="Forrest A.R."/>
            <person name="Zavolan M."/>
            <person name="Davis M.J."/>
            <person name="Wilming L.G."/>
            <person name="Aidinis V."/>
            <person name="Allen J.E."/>
            <person name="Ambesi-Impiombato A."/>
            <person name="Apweiler R."/>
            <person name="Aturaliya R.N."/>
            <person name="Bailey T.L."/>
            <person name="Bansal M."/>
            <person name="Baxter L."/>
            <person name="Beisel K.W."/>
            <person name="Bersano T."/>
            <person name="Bono H."/>
            <person name="Chalk A.M."/>
            <person name="Chiu K.P."/>
            <person name="Choudhary V."/>
            <person name="Christoffels A."/>
            <person name="Clutterbuck D.R."/>
            <person name="Crowe M.L."/>
            <person name="Dalla E."/>
            <person name="Dalrymple B.P."/>
            <person name="de Bono B."/>
            <person name="Della Gatta G."/>
            <person name="di Bernardo D."/>
            <person name="Down T."/>
            <person name="Engstrom P."/>
            <person name="Fagiolini M."/>
            <person name="Faulkner G."/>
            <person name="Fletcher C.F."/>
            <person name="Fukushima T."/>
            <person name="Furuno M."/>
            <person name="Futaki S."/>
            <person name="Gariboldi M."/>
            <person name="Georgii-Hemming P."/>
            <person name="Gingeras T.R."/>
            <person name="Gojobori T."/>
            <person name="Green R.E."/>
            <person name="Gustincich S."/>
            <person name="Harbers M."/>
            <person name="Hayashi Y."/>
            <person name="Hensch T.K."/>
            <person name="Hirokawa N."/>
            <person name="Hill D."/>
            <person name="Huminiecki L."/>
            <person name="Iacono M."/>
            <person name="Ikeo K."/>
            <person name="Iwama A."/>
            <person name="Ishikawa T."/>
            <person name="Jakt M."/>
            <person name="Kanapin A."/>
            <person name="Katoh M."/>
            <person name="Kawasawa Y."/>
            <person name="Kelso J."/>
            <person name="Kitamura H."/>
            <person name="Kitano H."/>
            <person name="Kollias G."/>
            <person name="Krishnan S.P."/>
            <person name="Kruger A."/>
            <person name="Kummerfeld S.K."/>
            <person name="Kurochkin I.V."/>
            <person name="Lareau L.F."/>
            <person name="Lazarevic D."/>
            <person name="Lipovich L."/>
            <person name="Liu J."/>
            <person name="Liuni S."/>
            <person name="McWilliam S."/>
            <person name="Madan Babu M."/>
            <person name="Madera M."/>
            <person name="Marchionni L."/>
            <person name="Matsuda H."/>
            <person name="Matsuzawa S."/>
            <person name="Miki H."/>
            <person name="Mignone F."/>
            <person name="Miyake S."/>
            <person name="Morris K."/>
            <person name="Mottagui-Tabar S."/>
            <person name="Mulder N."/>
            <person name="Nakano N."/>
            <person name="Nakauchi H."/>
            <person name="Ng P."/>
            <person name="Nilsson R."/>
            <person name="Nishiguchi S."/>
            <person name="Nishikawa S."/>
            <person name="Nori F."/>
            <person name="Ohara O."/>
            <person name="Okazaki Y."/>
            <person name="Orlando V."/>
            <person name="Pang K.C."/>
            <person name="Pavan W.J."/>
            <person name="Pavesi G."/>
            <person name="Pesole G."/>
            <person name="Petrovsky N."/>
            <person name="Piazza S."/>
            <person name="Reed J."/>
            <person name="Reid J.F."/>
            <person name="Ring B.Z."/>
            <person name="Ringwald M."/>
            <person name="Rost B."/>
            <person name="Ruan Y."/>
            <person name="Salzberg S.L."/>
            <person name="Sandelin A."/>
            <person name="Schneider C."/>
            <person name="Schoenbach C."/>
            <person name="Sekiguchi K."/>
            <person name="Semple C.A."/>
            <person name="Seno S."/>
            <person name="Sessa L."/>
            <person name="Sheng Y."/>
            <person name="Shibata Y."/>
            <person name="Shimada H."/>
            <person name="Shimada K."/>
            <person name="Silva D."/>
            <person name="Sinclair B."/>
            <person name="Sperling S."/>
            <person name="Stupka E."/>
            <person name="Sugiura K."/>
            <person name="Sultana R."/>
            <person name="Takenaka Y."/>
            <person name="Taki K."/>
            <person name="Tammoja K."/>
            <person name="Tan S.L."/>
            <person name="Tang S."/>
            <person name="Taylor M.S."/>
            <person name="Tegner J."/>
            <person name="Teichmann S.A."/>
            <person name="Ueda H.R."/>
            <person name="van Nimwegen E."/>
            <person name="Verardo R."/>
            <person name="Wei C.L."/>
            <person name="Yagi K."/>
            <person name="Yamanishi H."/>
            <person name="Zabarovsky E."/>
            <person name="Zhu S."/>
            <person name="Zimmer A."/>
            <person name="Hide W."/>
            <person name="Bult C."/>
            <person name="Grimmond S.M."/>
            <person name="Teasdale R.D."/>
            <person name="Liu E.T."/>
            <person name="Brusic V."/>
            <person name="Quackenbush J."/>
            <person name="Wahlestedt C."/>
            <person name="Mattick J.S."/>
            <person name="Hume D.A."/>
            <person name="Kai C."/>
            <person name="Sasaki D."/>
            <person name="Tomaru Y."/>
            <person name="Fukuda S."/>
            <person name="Kanamori-Katayama M."/>
            <person name="Suzuki M."/>
            <person name="Aoki J."/>
            <person name="Arakawa T."/>
            <person name="Iida J."/>
            <person name="Imamura K."/>
            <person name="Itoh M."/>
            <person name="Kato T."/>
            <person name="Kawaji H."/>
            <person name="Kawagashira N."/>
            <person name="Kawashima T."/>
            <person name="Kojima M."/>
            <person name="Kondo S."/>
            <person name="Konno H."/>
            <person name="Nakano K."/>
            <person name="Ninomiya N."/>
            <person name="Nishio T."/>
            <person name="Okada M."/>
            <person name="Plessy C."/>
            <person name="Shibata K."/>
            <person name="Shiraki T."/>
            <person name="Suzuki S."/>
            <person name="Tagami M."/>
            <person name="Waki K."/>
            <person name="Watahiki A."/>
            <person name="Okamura-Oho Y."/>
            <person name="Suzuki H."/>
            <person name="Kawai J."/>
            <person name="Hayashizaki Y."/>
        </authorList>
    </citation>
    <scope>NUCLEOTIDE SEQUENCE [LARGE SCALE MRNA]</scope>
    <source>
        <strain>C57BL/6J</strain>
        <tissue>Corpora quadrigemina</tissue>
        <tissue>Embryo</tissue>
        <tissue>Mammary gland</tissue>
        <tissue>Placenta</tissue>
    </source>
</reference>
<reference key="2">
    <citation type="journal article" date="2004" name="Genome Res.">
        <title>The status, quality, and expansion of the NIH full-length cDNA project: the Mammalian Gene Collection (MGC).</title>
        <authorList>
            <consortium name="The MGC Project Team"/>
        </authorList>
    </citation>
    <scope>NUCLEOTIDE SEQUENCE [LARGE SCALE MRNA]</scope>
    <source>
        <strain>FVB/N</strain>
        <tissue>Colon</tissue>
        <tissue>Mammary tumor</tissue>
    </source>
</reference>
<reference key="3">
    <citation type="submission" date="2007-03" db="UniProtKB">
        <authorList>
            <person name="Lubec G."/>
            <person name="Klug S."/>
        </authorList>
    </citation>
    <scope>PROTEIN SEQUENCE OF 189-198</scope>
    <scope>IDENTIFICATION BY MASS SPECTROMETRY</scope>
    <source>
        <tissue>Hippocampus</tissue>
    </source>
</reference>
<reference key="4">
    <citation type="journal article" date="2004" name="Nat. Immunol.">
        <title>Two isoforms of otubain 1 regulate T cell anergy via GRAIL.</title>
        <authorList>
            <person name="Soares L."/>
            <person name="Seroogy C."/>
            <person name="Skrenta H."/>
            <person name="Anandasabapathy N."/>
            <person name="Lovelace P."/>
            <person name="Chung C.D."/>
            <person name="Engleman E."/>
            <person name="Fathman C.G."/>
        </authorList>
    </citation>
    <scope>FUNCTION</scope>
</reference>
<reference key="5">
    <citation type="journal article" date="2007" name="Proc. Natl. Acad. Sci. U.S.A.">
        <title>Large-scale phosphorylation analysis of mouse liver.</title>
        <authorList>
            <person name="Villen J."/>
            <person name="Beausoleil S.A."/>
            <person name="Gerber S.A."/>
            <person name="Gygi S.P."/>
        </authorList>
    </citation>
    <scope>IDENTIFICATION BY MASS SPECTROMETRY [LARGE SCALE ANALYSIS]</scope>
    <source>
        <tissue>Liver</tissue>
    </source>
</reference>
<reference key="6">
    <citation type="journal article" date="2010" name="Cell">
        <title>A tissue-specific atlas of mouse protein phosphorylation and expression.</title>
        <authorList>
            <person name="Huttlin E.L."/>
            <person name="Jedrychowski M.P."/>
            <person name="Elias J.E."/>
            <person name="Goswami T."/>
            <person name="Rad R."/>
            <person name="Beausoleil S.A."/>
            <person name="Villen J."/>
            <person name="Haas W."/>
            <person name="Sowa M.E."/>
            <person name="Gygi S.P."/>
        </authorList>
    </citation>
    <scope>IDENTIFICATION BY MASS SPECTROMETRY [LARGE SCALE ANALYSIS]</scope>
    <source>
        <tissue>Brain</tissue>
        <tissue>Brown adipose tissue</tissue>
        <tissue>Heart</tissue>
        <tissue>Kidney</tissue>
        <tissue>Liver</tissue>
        <tissue>Lung</tissue>
        <tissue>Pancreas</tissue>
        <tissue>Spleen</tissue>
        <tissue>Testis</tissue>
    </source>
</reference>